<proteinExistence type="evidence at protein level"/>
<accession>Q8TEQ8</accession>
<accession>B1AML3</accession>
<accession>Q6P154</accession>
<accession>Q6UX80</accession>
<accession>Q8TDS8</accession>
<accession>Q96CS9</accession>
<accession>Q9BVN9</accession>
<accession>Q9Y4B0</accession>
<dbReference type="EC" id="2.-.-.-" evidence="13 14 15"/>
<dbReference type="EMBL" id="AL833956">
    <property type="protein sequence ID" value="CAD38806.1"/>
    <property type="status" value="ALT_FRAME"/>
    <property type="molecule type" value="mRNA"/>
</dbReference>
<dbReference type="EMBL" id="AK074064">
    <property type="protein sequence ID" value="BAB84890.1"/>
    <property type="status" value="ALT_FRAME"/>
    <property type="molecule type" value="mRNA"/>
</dbReference>
<dbReference type="EMBL" id="AK090433">
    <property type="protein sequence ID" value="BAC03414.1"/>
    <property type="status" value="ALT_FRAME"/>
    <property type="molecule type" value="mRNA"/>
</dbReference>
<dbReference type="EMBL" id="AY358472">
    <property type="protein sequence ID" value="AAQ88836.1"/>
    <property type="molecule type" value="mRNA"/>
</dbReference>
<dbReference type="EMBL" id="AC004472">
    <property type="protein sequence ID" value="AAC07985.1"/>
    <property type="status" value="ALT_SEQ"/>
    <property type="molecule type" value="Genomic_DNA"/>
</dbReference>
<dbReference type="EMBL" id="AL353795">
    <property type="status" value="NOT_ANNOTATED_CDS"/>
    <property type="molecule type" value="Genomic_DNA"/>
</dbReference>
<dbReference type="EMBL" id="CH471071">
    <property type="protein sequence ID" value="EAW58397.1"/>
    <property type="molecule type" value="Genomic_DNA"/>
</dbReference>
<dbReference type="EMBL" id="BC001030">
    <property type="protein sequence ID" value="AAH01030.1"/>
    <property type="status" value="ALT_INIT"/>
    <property type="molecule type" value="mRNA"/>
</dbReference>
<dbReference type="EMBL" id="BC013987">
    <property type="protein sequence ID" value="AAH13987.1"/>
    <property type="status" value="ALT_INIT"/>
    <property type="molecule type" value="mRNA"/>
</dbReference>
<dbReference type="EMBL" id="BC029271">
    <property type="protein sequence ID" value="AAH29271.1"/>
    <property type="molecule type" value="mRNA"/>
</dbReference>
<dbReference type="EMBL" id="BC036916">
    <property type="protein sequence ID" value="AAH36916.1"/>
    <property type="molecule type" value="mRNA"/>
</dbReference>
<dbReference type="EMBL" id="BC065282">
    <property type="protein sequence ID" value="AAH65282.1"/>
    <property type="molecule type" value="mRNA"/>
</dbReference>
<dbReference type="EMBL" id="AB083625">
    <property type="protein sequence ID" value="BAB89338.1"/>
    <property type="molecule type" value="Genomic_DNA"/>
</dbReference>
<dbReference type="CCDS" id="CCDS6575.1">
    <molecule id="Q8TEQ8-1"/>
</dbReference>
<dbReference type="CCDS" id="CCDS6576.1">
    <molecule id="Q8TEQ8-2"/>
</dbReference>
<dbReference type="PIR" id="T02245">
    <property type="entry name" value="T02245"/>
</dbReference>
<dbReference type="RefSeq" id="NP_001188413.1">
    <molecule id="Q8TEQ8-2"/>
    <property type="nucleotide sequence ID" value="NM_001201484.2"/>
</dbReference>
<dbReference type="RefSeq" id="NP_116023.2">
    <molecule id="Q8TEQ8-1"/>
    <property type="nucleotide sequence ID" value="NM_032634.3"/>
</dbReference>
<dbReference type="RefSeq" id="NP_690577.2">
    <molecule id="Q8TEQ8-2"/>
    <property type="nucleotide sequence ID" value="NM_152850.3"/>
</dbReference>
<dbReference type="RefSeq" id="XP_005251676.1">
    <molecule id="Q8TEQ8-1"/>
    <property type="nucleotide sequence ID" value="XM_005251619.4"/>
</dbReference>
<dbReference type="RefSeq" id="XP_016870711.1">
    <property type="nucleotide sequence ID" value="XM_017015222.1"/>
</dbReference>
<dbReference type="RefSeq" id="XP_016870712.1">
    <property type="nucleotide sequence ID" value="XM_017015223.1"/>
</dbReference>
<dbReference type="RefSeq" id="XP_016870713.1">
    <property type="nucleotide sequence ID" value="XM_017015224.1"/>
</dbReference>
<dbReference type="RefSeq" id="XP_054219997.1">
    <molecule id="Q8TEQ8-1"/>
    <property type="nucleotide sequence ID" value="XM_054364022.1"/>
</dbReference>
<dbReference type="SMR" id="Q8TEQ8"/>
<dbReference type="BioGRID" id="124223">
    <property type="interactions" value="87"/>
</dbReference>
<dbReference type="ComplexPortal" id="CPX-2679">
    <property type="entry name" value="Glycosylphosphatidylinsitol ethanolamine-phosphate transferase III complex"/>
</dbReference>
<dbReference type="FunCoup" id="Q8TEQ8">
    <property type="interactions" value="2035"/>
</dbReference>
<dbReference type="IntAct" id="Q8TEQ8">
    <property type="interactions" value="54"/>
</dbReference>
<dbReference type="MINT" id="Q8TEQ8"/>
<dbReference type="STRING" id="9606.ENSP00000367880"/>
<dbReference type="GlyCosmos" id="Q8TEQ8">
    <property type="glycosylation" value="1 site, No reported glycans"/>
</dbReference>
<dbReference type="GlyGen" id="Q8TEQ8">
    <property type="glycosylation" value="4 sites, 1 N-linked glycan (1 site), 1 O-linked glycan (2 sites)"/>
</dbReference>
<dbReference type="iPTMnet" id="Q8TEQ8"/>
<dbReference type="PhosphoSitePlus" id="Q8TEQ8"/>
<dbReference type="SwissPalm" id="Q8TEQ8"/>
<dbReference type="BioMuta" id="PIGO"/>
<dbReference type="DMDM" id="61252289"/>
<dbReference type="jPOST" id="Q8TEQ8"/>
<dbReference type="MassIVE" id="Q8TEQ8"/>
<dbReference type="PaxDb" id="9606-ENSP00000367880"/>
<dbReference type="PeptideAtlas" id="Q8TEQ8"/>
<dbReference type="ProteomicsDB" id="74479">
    <molecule id="Q8TEQ8-1"/>
</dbReference>
<dbReference type="ProteomicsDB" id="74480">
    <molecule id="Q8TEQ8-2"/>
</dbReference>
<dbReference type="Pumba" id="Q8TEQ8"/>
<dbReference type="Antibodypedia" id="11435">
    <property type="antibodies" value="150 antibodies from 23 providers"/>
</dbReference>
<dbReference type="DNASU" id="84720"/>
<dbReference type="Ensembl" id="ENST00000298004.9">
    <molecule id="Q8TEQ8-2"/>
    <property type="protein sequence ID" value="ENSP00000298004.5"/>
    <property type="gene ID" value="ENSG00000165282.16"/>
</dbReference>
<dbReference type="Ensembl" id="ENST00000361778.7">
    <molecule id="Q8TEQ8-2"/>
    <property type="protein sequence ID" value="ENSP00000354678.2"/>
    <property type="gene ID" value="ENSG00000165282.16"/>
</dbReference>
<dbReference type="Ensembl" id="ENST00000378617.4">
    <molecule id="Q8TEQ8-1"/>
    <property type="protein sequence ID" value="ENSP00000367880.3"/>
    <property type="gene ID" value="ENSG00000165282.16"/>
</dbReference>
<dbReference type="Ensembl" id="ENST00000700254.2">
    <molecule id="Q8TEQ8-2"/>
    <property type="protein sequence ID" value="ENSP00000514892.1"/>
    <property type="gene ID" value="ENSG00000165282.16"/>
</dbReference>
<dbReference type="Ensembl" id="ENST00000700257.1">
    <molecule id="Q8TEQ8-1"/>
    <property type="protein sequence ID" value="ENSP00000514894.1"/>
    <property type="gene ID" value="ENSG00000165282.16"/>
</dbReference>
<dbReference type="GeneID" id="84720"/>
<dbReference type="KEGG" id="hsa:84720"/>
<dbReference type="MANE-Select" id="ENST00000378617.4">
    <property type="protein sequence ID" value="ENSP00000367880.3"/>
    <property type="RefSeq nucleotide sequence ID" value="NM_032634.4"/>
    <property type="RefSeq protein sequence ID" value="NP_116023.2"/>
</dbReference>
<dbReference type="UCSC" id="uc003zwd.4">
    <molecule id="Q8TEQ8-1"/>
    <property type="organism name" value="human"/>
</dbReference>
<dbReference type="AGR" id="HGNC:23215"/>
<dbReference type="CTD" id="84720"/>
<dbReference type="DisGeNET" id="84720"/>
<dbReference type="GeneCards" id="PIGO"/>
<dbReference type="HGNC" id="HGNC:23215">
    <property type="gene designation" value="PIGO"/>
</dbReference>
<dbReference type="HPA" id="ENSG00000165282">
    <property type="expression patterns" value="Low tissue specificity"/>
</dbReference>
<dbReference type="MalaCards" id="PIGO"/>
<dbReference type="MIM" id="614730">
    <property type="type" value="gene"/>
</dbReference>
<dbReference type="MIM" id="614749">
    <property type="type" value="phenotype"/>
</dbReference>
<dbReference type="neXtProt" id="NX_Q8TEQ8"/>
<dbReference type="OpenTargets" id="ENSG00000165282"/>
<dbReference type="Orphanet" id="247262">
    <property type="disease" value="Hyperphosphatasia-intellectual disability syndrome"/>
</dbReference>
<dbReference type="PharmGKB" id="PA134993507"/>
<dbReference type="VEuPathDB" id="HostDB:ENSG00000165282"/>
<dbReference type="eggNOG" id="KOG2126">
    <property type="taxonomic scope" value="Eukaryota"/>
</dbReference>
<dbReference type="GeneTree" id="ENSGT00910000144278"/>
<dbReference type="HOGENOM" id="CLU_004298_2_1_1"/>
<dbReference type="InParanoid" id="Q8TEQ8"/>
<dbReference type="OMA" id="YPSFDIF"/>
<dbReference type="OrthoDB" id="272139at2759"/>
<dbReference type="PAN-GO" id="Q8TEQ8">
    <property type="GO annotations" value="3 GO annotations based on evolutionary models"/>
</dbReference>
<dbReference type="PhylomeDB" id="Q8TEQ8"/>
<dbReference type="TreeFam" id="TF354249"/>
<dbReference type="PathwayCommons" id="Q8TEQ8"/>
<dbReference type="Reactome" id="R-HSA-162710">
    <property type="pathway name" value="Synthesis of glycosylphosphatidylinositol (GPI)"/>
</dbReference>
<dbReference type="SignaLink" id="Q8TEQ8"/>
<dbReference type="SIGNOR" id="Q8TEQ8"/>
<dbReference type="UniPathway" id="UPA00196"/>
<dbReference type="BioGRID-ORCS" id="84720">
    <property type="hits" value="47 hits in 1167 CRISPR screens"/>
</dbReference>
<dbReference type="ChiTaRS" id="PIGO">
    <property type="organism name" value="human"/>
</dbReference>
<dbReference type="GenomeRNAi" id="84720"/>
<dbReference type="Pharos" id="Q8TEQ8">
    <property type="development level" value="Tbio"/>
</dbReference>
<dbReference type="PRO" id="PR:Q8TEQ8"/>
<dbReference type="Proteomes" id="UP000005640">
    <property type="component" value="Chromosome 9"/>
</dbReference>
<dbReference type="RNAct" id="Q8TEQ8">
    <property type="molecule type" value="protein"/>
</dbReference>
<dbReference type="Bgee" id="ENSG00000165282">
    <property type="expression patterns" value="Expressed in mucosa of transverse colon and 187 other cell types or tissues"/>
</dbReference>
<dbReference type="GO" id="GO:0005789">
    <property type="term" value="C:endoplasmic reticulum membrane"/>
    <property type="evidence" value="ECO:0000250"/>
    <property type="project" value="UniProtKB"/>
</dbReference>
<dbReference type="GO" id="GO:0016020">
    <property type="term" value="C:membrane"/>
    <property type="evidence" value="ECO:0007005"/>
    <property type="project" value="UniProtKB"/>
</dbReference>
<dbReference type="GO" id="GO:0051377">
    <property type="term" value="F:mannose-ethanolamine phosphotransferase activity"/>
    <property type="evidence" value="ECO:0000315"/>
    <property type="project" value="UniProtKB"/>
</dbReference>
<dbReference type="GO" id="GO:0006506">
    <property type="term" value="P:GPI anchor biosynthetic process"/>
    <property type="evidence" value="ECO:0000315"/>
    <property type="project" value="UniProtKB"/>
</dbReference>
<dbReference type="CDD" id="cd16023">
    <property type="entry name" value="GPI_EPT_3"/>
    <property type="match status" value="1"/>
</dbReference>
<dbReference type="FunFam" id="3.40.720.10:FF:000041">
    <property type="entry name" value="GPI ethanolamine phosphate transferase 3"/>
    <property type="match status" value="1"/>
</dbReference>
<dbReference type="Gene3D" id="3.40.720.10">
    <property type="entry name" value="Alkaline Phosphatase, subunit A"/>
    <property type="match status" value="1"/>
</dbReference>
<dbReference type="InterPro" id="IPR017850">
    <property type="entry name" value="Alkaline_phosphatase_core_sf"/>
</dbReference>
<dbReference type="InterPro" id="IPR002591">
    <property type="entry name" value="Phosphodiest/P_Trfase"/>
</dbReference>
<dbReference type="InterPro" id="IPR037675">
    <property type="entry name" value="PIG-O_N"/>
</dbReference>
<dbReference type="InterPro" id="IPR039524">
    <property type="entry name" value="PIGO/GPI13"/>
</dbReference>
<dbReference type="PANTHER" id="PTHR23071:SF1">
    <property type="entry name" value="GPI ETHANOLAMINE PHOSPHATE TRANSFERASE 3"/>
    <property type="match status" value="1"/>
</dbReference>
<dbReference type="PANTHER" id="PTHR23071">
    <property type="entry name" value="PHOSPHATIDYLINOSITOL GLYCAN"/>
    <property type="match status" value="1"/>
</dbReference>
<dbReference type="Pfam" id="PF01663">
    <property type="entry name" value="Phosphodiest"/>
    <property type="match status" value="1"/>
</dbReference>
<dbReference type="SUPFAM" id="SSF53649">
    <property type="entry name" value="Alkaline phosphatase-like"/>
    <property type="match status" value="1"/>
</dbReference>
<evidence type="ECO:0000250" key="1">
    <source>
        <dbReference type="UniProtKB" id="Q9JJI6"/>
    </source>
</evidence>
<evidence type="ECO:0000255" key="2"/>
<evidence type="ECO:0000269" key="3">
    <source>
    </source>
</evidence>
<evidence type="ECO:0000269" key="4">
    <source>
    </source>
</evidence>
<evidence type="ECO:0000269" key="5">
    <source>
    </source>
</evidence>
<evidence type="ECO:0000269" key="6">
    <source>
    </source>
</evidence>
<evidence type="ECO:0000269" key="7">
    <source>
    </source>
</evidence>
<evidence type="ECO:0000269" key="8">
    <source>
    </source>
</evidence>
<evidence type="ECO:0000269" key="9">
    <source>
    </source>
</evidence>
<evidence type="ECO:0000303" key="10">
    <source>
    </source>
</evidence>
<evidence type="ECO:0000303" key="11">
    <source>
    </source>
</evidence>
<evidence type="ECO:0000305" key="12"/>
<evidence type="ECO:0000305" key="13">
    <source>
    </source>
</evidence>
<evidence type="ECO:0000305" key="14">
    <source>
    </source>
</evidence>
<evidence type="ECO:0000305" key="15">
    <source>
    </source>
</evidence>
<evidence type="ECO:0000312" key="16">
    <source>
        <dbReference type="HGNC" id="HGNC:23215"/>
    </source>
</evidence>
<keyword id="KW-0025">Alternative splicing</keyword>
<keyword id="KW-0225">Disease variant</keyword>
<keyword id="KW-0256">Endoplasmic reticulum</keyword>
<keyword id="KW-0325">Glycoprotein</keyword>
<keyword id="KW-0337">GPI-anchor biosynthesis</keyword>
<keyword id="KW-0991">Intellectual disability</keyword>
<keyword id="KW-0472">Membrane</keyword>
<keyword id="KW-1267">Proteomics identification</keyword>
<keyword id="KW-1185">Reference proteome</keyword>
<keyword id="KW-0808">Transferase</keyword>
<keyword id="KW-0812">Transmembrane</keyword>
<keyword id="KW-1133">Transmembrane helix</keyword>
<name>PIGO_HUMAN</name>
<sequence>MQKASVLLFLAWVCFLFYAGIALFTSGFLLTRLELTNHSSCQEPPGPGSLPWGSQGKPGACWMASRFSRVVLVLIDALRFDFAQPQHSHVPREPPVSLPFLGKLSSLQRILEIQPHHARLYRSQVDPPTTTMQRLKALTTGSLPTFIDAGSNFASHAIVEDNLIKQLTSAGRRVVFMGDDTWKDLFPGAFSKAFFFPSFNVRDLDTVDNGILEHLYPTMDSGEWDVLIAHFLGVDHCGHKHGPHHPEMAKKLSQMDQVIQGLVERLENDTLLVVAGDHGMTTNGDHGGDSELEVSAALFLYSPTAVFPSTPPEEPEVIPQVSLVPTLALLLGLPIPFGNIGEVMAELFSGGEDSQPHSSALAQASALHLNAQQVSRFLHTYSAATQDLQAKELHQLQNLFSKASADYQWLLQSPKGAEATLPTVIAELQQFLRGARAMCIESWARFSLVRMAGGTALLAASCFICLLASQWAISPGFPFCPLLLTPVAWGLVGAIAYAGLLGTIELKLDLVLLGAVAAVSSFLPFLWKAWAGWGSKRPLATLFPIPGPVLLLLLFRLAVFFSDSFVVAEARATPFLLGSFILLLVVQLHWEGQLLPPKLLTMPRLGTSATTNPPRHNGAYALRLGIGLLLCTRLAGLFHRCPEETPVCHSSPWLSPLASMVGGRAKNLWYGACVAALVALLAAVRLWLRRYGNLKSPEPPMLFVRWGLPLMALGTAAYWALASGADEAPPRLRVLVSGASMVLPRAVAGLAASGLALLLWKPVTVLVKAGAGAPRTRTVLTPFSGPPTSQADLDYVVPQIYRHMQEEFRGRLERTKSQGPLTVAAYQLGSVYSAAMVTALTLLAFPLLLLHAERISLVFLLLFLQSFLLLHLLAAGIPVTTPGPFTVPWQAVSAWALMATQTFYSTGHQPVFPAIHWHAAFVGFPEGHGSCTWLPALLVGANTFASHLLFAVGCPLLLLWPFLCESQGLRKRQQPPGNEADARVRPEEEEEPLMEMRLRDAPQHFYAALLQLGLKYLFILGIQILACALAASILRRHLMVWKVFAPKFIFEAVGFIVSSVGLLLGIALVMRVDGAVSSWFRQLFLAQQR</sequence>
<feature type="chain" id="PRO_0000058438" description="GPI ethanolamine phosphate transferase 3, catalytic subunit">
    <location>
        <begin position="1"/>
        <end position="1089"/>
    </location>
</feature>
<feature type="transmembrane region" description="Helical" evidence="2">
    <location>
        <begin position="4"/>
        <end position="24"/>
    </location>
</feature>
<feature type="transmembrane region" description="Helical" evidence="2">
    <location>
        <begin position="457"/>
        <end position="477"/>
    </location>
</feature>
<feature type="transmembrane region" description="Helical" evidence="2">
    <location>
        <begin position="482"/>
        <end position="502"/>
    </location>
</feature>
<feature type="transmembrane region" description="Helical" evidence="2">
    <location>
        <begin position="510"/>
        <end position="530"/>
    </location>
</feature>
<feature type="transmembrane region" description="Helical" evidence="2">
    <location>
        <begin position="541"/>
        <end position="561"/>
    </location>
</feature>
<feature type="transmembrane region" description="Helical" evidence="2">
    <location>
        <begin position="575"/>
        <end position="595"/>
    </location>
</feature>
<feature type="transmembrane region" description="Helical" evidence="2">
    <location>
        <begin position="668"/>
        <end position="688"/>
    </location>
</feature>
<feature type="transmembrane region" description="Helical" evidence="2">
    <location>
        <begin position="701"/>
        <end position="721"/>
    </location>
</feature>
<feature type="transmembrane region" description="Helical" evidence="2">
    <location>
        <begin position="747"/>
        <end position="767"/>
    </location>
</feature>
<feature type="transmembrane region" description="Helical" evidence="2">
    <location>
        <begin position="830"/>
        <end position="850"/>
    </location>
</feature>
<feature type="transmembrane region" description="Helical" evidence="2">
    <location>
        <begin position="857"/>
        <end position="877"/>
    </location>
</feature>
<feature type="transmembrane region" description="Helical" evidence="2">
    <location>
        <begin position="944"/>
        <end position="964"/>
    </location>
</feature>
<feature type="transmembrane region" description="Helical" evidence="2">
    <location>
        <begin position="1014"/>
        <end position="1034"/>
    </location>
</feature>
<feature type="transmembrane region" description="Helical" evidence="2">
    <location>
        <begin position="1048"/>
        <end position="1068"/>
    </location>
</feature>
<feature type="glycosylation site" description="N-linked (GlcNAc...) asparagine" evidence="2">
    <location>
        <position position="268"/>
    </location>
</feature>
<feature type="splice variant" id="VSP_003944" description="In isoform 2." evidence="11">
    <location>
        <begin position="449"/>
        <end position="865"/>
    </location>
</feature>
<feature type="sequence variant" id="VAR_079410" description="In HPMRS2; decrease in mannose-ethanolamine phosphotransferase activity; dbSNP:rs757441073." evidence="5 7">
    <original>R</original>
    <variation>W</variation>
    <location>
        <position position="119"/>
    </location>
</feature>
<feature type="sequence variant" id="VAR_071074" description="Found in a patient with epileptic encephalopathy; likely pathogenic; decrease in mannose-ethanolamine phosphotransferase activity; decreased protein expression." evidence="6">
    <original>T</original>
    <variation>N</variation>
    <location>
        <position position="130"/>
    </location>
</feature>
<feature type="sequence variant" id="VAR_079411" description="Found in patients with severe infantile epileptic encephalopathy; uncertain significance; dbSNP:rs1829550863." evidence="9">
    <original>M</original>
    <variation>I</variation>
    <location>
        <position position="255"/>
    </location>
</feature>
<feature type="sequence variant" id="VAR_079412" description="In HPMRS2; uncertain significance; decrease in mannose-ethanolamine phosphotransferase activity; decreased protein expression; dbSNP:rs779525065." evidence="7">
    <original>M</original>
    <variation>K</variation>
    <location>
        <position position="344"/>
    </location>
</feature>
<feature type="sequence variant" id="VAR_079413" description="In HPMRS2; decrease in mannose-ethanolamine phosphotransferase activity; decreased protein expression; dbSNP:rs1214104267." evidence="7">
    <original>N</original>
    <variation>S</variation>
    <location>
        <position position="370"/>
    </location>
</feature>
<feature type="sequence variant" id="VAR_079414" description="In HPMRS2." evidence="7">
    <location>
        <begin position="430"/>
        <end position="1089"/>
    </location>
</feature>
<feature type="sequence variant" id="VAR_036332" description="In a colorectal cancer sample; somatic mutation." evidence="3">
    <original>L</original>
    <variation>M</variation>
    <location>
        <position position="686"/>
    </location>
</feature>
<feature type="sequence variant" id="VAR_079415" description="In HPMRS2; uncertain significance; dbSNP:rs909488930." evidence="8">
    <original>H</original>
    <variation>P</variation>
    <location>
        <position position="871"/>
    </location>
</feature>
<feature type="sequence variant" id="VAR_068809" description="In HPMRS2; dbSNP:rs142164373." evidence="4">
    <original>L</original>
    <variation>F</variation>
    <location>
        <position position="957"/>
    </location>
</feature>
<feature type="sequence variant" id="VAR_079416" description="In HPMRS2; decrease in mannose-ethanolamine phosphotransferase activity; increased protein expression." evidence="7">
    <original>K</original>
    <variation>E</variation>
    <location>
        <position position="1047"/>
    </location>
</feature>
<feature type="sequence conflict" description="In Ref. 7; AAH13987." evidence="12" ref="7">
    <original>DDT</original>
    <variation>ARG</variation>
    <location>
        <begin position="179"/>
        <end position="181"/>
    </location>
</feature>
<feature type="sequence conflict" description="In Ref. 7; AAH01030." evidence="12" ref="7">
    <original>DVLIAHF</original>
    <variation>EVSNQHV</variation>
    <location>
        <begin position="225"/>
        <end position="231"/>
    </location>
</feature>
<feature type="sequence conflict" description="In Ref. 7; AAH29271." evidence="12" ref="7">
    <original>G</original>
    <variation>W</variation>
    <location>
        <position position="350"/>
    </location>
</feature>
<feature type="sequence conflict" description="In Ref. 7; AAH29271." evidence="12" ref="7">
    <original>D</original>
    <variation>Y</variation>
    <location>
        <position position="353"/>
    </location>
</feature>
<feature type="sequence conflict" description="In Ref. 1; CAD38806." evidence="12" ref="1">
    <original>KG</original>
    <variation>R</variation>
    <location>
        <begin position="415"/>
        <end position="416"/>
    </location>
</feature>
<feature type="sequence conflict" description="In Ref. 8; BAB89338." evidence="12" ref="8">
    <original>PFTVPWQAVSAWALMATQTFYSTGHQPVFPAIHWHAAFVGFPEGHGSCTWLPALLVGANTFASHLLFAVGCPLLLLWPFLCESQGL</original>
    <variation>KYLSSDSLKDNSDVSSAPLVFKEVLLLMFLSLTEGPMPHTTRKVFLVSSLLPAIAKQIDPSCWFPGFMERRDKESSKTPCGNAASS</variation>
    <location>
        <begin position="884"/>
        <end position="969"/>
    </location>
</feature>
<protein>
    <recommendedName>
        <fullName>GPI ethanolamine phosphate transferase 3, catalytic subunit</fullName>
        <ecNumber evidence="13 14 15">2.-.-.-</ecNumber>
    </recommendedName>
    <alternativeName>
        <fullName>Phosphatidylinositol-glycan biosynthesis class O protein</fullName>
        <shortName evidence="1">PIG-O</shortName>
        <shortName evidence="10">hGPCR43</shortName>
    </alternativeName>
</protein>
<reference key="1">
    <citation type="journal article" date="2007" name="BMC Genomics">
        <title>The full-ORF clone resource of the German cDNA consortium.</title>
        <authorList>
            <person name="Bechtel S."/>
            <person name="Rosenfelder H."/>
            <person name="Duda A."/>
            <person name="Schmidt C.P."/>
            <person name="Ernst U."/>
            <person name="Wellenreuther R."/>
            <person name="Mehrle A."/>
            <person name="Schuster C."/>
            <person name="Bahr A."/>
            <person name="Bloecker H."/>
            <person name="Heubner D."/>
            <person name="Hoerlein A."/>
            <person name="Michel G."/>
            <person name="Wedler H."/>
            <person name="Koehrer K."/>
            <person name="Ottenwaelder B."/>
            <person name="Poustka A."/>
            <person name="Wiemann S."/>
            <person name="Schupp I."/>
        </authorList>
    </citation>
    <scope>NUCLEOTIDE SEQUENCE [LARGE SCALE MRNA] (ISOFORM 1)</scope>
    <source>
        <tissue>Testis</tissue>
    </source>
</reference>
<reference key="2">
    <citation type="submission" date="2002-01" db="EMBL/GenBank/DDBJ databases">
        <title>The nucleotide sequence of a long cDNA clone isolated from human spleen.</title>
        <authorList>
            <person name="Jikuya H."/>
            <person name="Takano J."/>
            <person name="Nomura N."/>
            <person name="Kikuno R."/>
            <person name="Nagase T."/>
            <person name="Ohara O."/>
        </authorList>
    </citation>
    <scope>NUCLEOTIDE SEQUENCE [LARGE SCALE MRNA] (ISOFORM 1)</scope>
    <source>
        <tissue>Spleen</tissue>
    </source>
</reference>
<reference key="3">
    <citation type="journal article" date="2003" name="Genome Res.">
        <title>The secreted protein discovery initiative (SPDI), a large-scale effort to identify novel human secreted and transmembrane proteins: a bioinformatics assessment.</title>
        <authorList>
            <person name="Clark H.F."/>
            <person name="Gurney A.L."/>
            <person name="Abaya E."/>
            <person name="Baker K."/>
            <person name="Baldwin D.T."/>
            <person name="Brush J."/>
            <person name="Chen J."/>
            <person name="Chow B."/>
            <person name="Chui C."/>
            <person name="Crowley C."/>
            <person name="Currell B."/>
            <person name="Deuel B."/>
            <person name="Dowd P."/>
            <person name="Eaton D."/>
            <person name="Foster J.S."/>
            <person name="Grimaldi C."/>
            <person name="Gu Q."/>
            <person name="Hass P.E."/>
            <person name="Heldens S."/>
            <person name="Huang A."/>
            <person name="Kim H.S."/>
            <person name="Klimowski L."/>
            <person name="Jin Y."/>
            <person name="Johnson S."/>
            <person name="Lee J."/>
            <person name="Lewis L."/>
            <person name="Liao D."/>
            <person name="Mark M.R."/>
            <person name="Robbie E."/>
            <person name="Sanchez C."/>
            <person name="Schoenfeld J."/>
            <person name="Seshagiri S."/>
            <person name="Simmons L."/>
            <person name="Singh J."/>
            <person name="Smith V."/>
            <person name="Stinson J."/>
            <person name="Vagts A."/>
            <person name="Vandlen R.L."/>
            <person name="Watanabe C."/>
            <person name="Wieand D."/>
            <person name="Woods K."/>
            <person name="Xie M.-H."/>
            <person name="Yansura D.G."/>
            <person name="Yi S."/>
            <person name="Yu G."/>
            <person name="Yuan J."/>
            <person name="Zhang M."/>
            <person name="Zhang Z."/>
            <person name="Goddard A.D."/>
            <person name="Wood W.I."/>
            <person name="Godowski P.J."/>
            <person name="Gray A.M."/>
        </authorList>
    </citation>
    <scope>NUCLEOTIDE SEQUENCE [LARGE SCALE MRNA] (ISOFORM 1)</scope>
</reference>
<reference key="4">
    <citation type="submission" date="1998-03" db="EMBL/GenBank/DDBJ databases">
        <title>Sequence analysis of a human P1 clone containing the XRCC9 DNA repair gene.</title>
        <authorList>
            <person name="Lamerdin J.E."/>
            <person name="McCready P.M."/>
            <person name="Skowronski E."/>
            <person name="Adamson A.W."/>
            <person name="Burkhart-Schultz K."/>
            <person name="Gordon L."/>
            <person name="Kyle A."/>
            <person name="Ramirez M."/>
            <person name="Stilwagen S."/>
            <person name="Phan H."/>
            <person name="Velasco N."/>
            <person name="Garnes J."/>
            <person name="Danganan L."/>
            <person name="Poundstone P."/>
            <person name="Christensen M."/>
            <person name="Georgescu A."/>
            <person name="Avila J."/>
            <person name="Liu S."/>
            <person name="Attix C."/>
            <person name="Andreise T."/>
            <person name="Trankheim M."/>
            <person name="Amico-Keller G."/>
            <person name="Coefield J."/>
            <person name="Duarte S."/>
            <person name="Lucas S."/>
            <person name="Bruce R."/>
            <person name="Thomas P."/>
            <person name="Quan G."/>
            <person name="Kronmiller B."/>
            <person name="Arellano A."/>
            <person name="Montgomery M."/>
            <person name="Ow D."/>
            <person name="Nolan M."/>
            <person name="Trong S."/>
            <person name="Kobayashi A."/>
            <person name="Olsen A.O."/>
            <person name="Carrano A.V."/>
        </authorList>
    </citation>
    <scope>NUCLEOTIDE SEQUENCE [GENOMIC DNA]</scope>
</reference>
<reference key="5">
    <citation type="journal article" date="2004" name="Nature">
        <title>DNA sequence and analysis of human chromosome 9.</title>
        <authorList>
            <person name="Humphray S.J."/>
            <person name="Oliver K."/>
            <person name="Hunt A.R."/>
            <person name="Plumb R.W."/>
            <person name="Loveland J.E."/>
            <person name="Howe K.L."/>
            <person name="Andrews T.D."/>
            <person name="Searle S."/>
            <person name="Hunt S.E."/>
            <person name="Scott C.E."/>
            <person name="Jones M.C."/>
            <person name="Ainscough R."/>
            <person name="Almeida J.P."/>
            <person name="Ambrose K.D."/>
            <person name="Ashwell R.I.S."/>
            <person name="Babbage A.K."/>
            <person name="Babbage S."/>
            <person name="Bagguley C.L."/>
            <person name="Bailey J."/>
            <person name="Banerjee R."/>
            <person name="Barker D.J."/>
            <person name="Barlow K.F."/>
            <person name="Bates K."/>
            <person name="Beasley H."/>
            <person name="Beasley O."/>
            <person name="Bird C.P."/>
            <person name="Bray-Allen S."/>
            <person name="Brown A.J."/>
            <person name="Brown J.Y."/>
            <person name="Burford D."/>
            <person name="Burrill W."/>
            <person name="Burton J."/>
            <person name="Carder C."/>
            <person name="Carter N.P."/>
            <person name="Chapman J.C."/>
            <person name="Chen Y."/>
            <person name="Clarke G."/>
            <person name="Clark S.Y."/>
            <person name="Clee C.M."/>
            <person name="Clegg S."/>
            <person name="Collier R.E."/>
            <person name="Corby N."/>
            <person name="Crosier M."/>
            <person name="Cummings A.T."/>
            <person name="Davies J."/>
            <person name="Dhami P."/>
            <person name="Dunn M."/>
            <person name="Dutta I."/>
            <person name="Dyer L.W."/>
            <person name="Earthrowl M.E."/>
            <person name="Faulkner L."/>
            <person name="Fleming C.J."/>
            <person name="Frankish A."/>
            <person name="Frankland J.A."/>
            <person name="French L."/>
            <person name="Fricker D.G."/>
            <person name="Garner P."/>
            <person name="Garnett J."/>
            <person name="Ghori J."/>
            <person name="Gilbert J.G.R."/>
            <person name="Glison C."/>
            <person name="Grafham D.V."/>
            <person name="Gribble S."/>
            <person name="Griffiths C."/>
            <person name="Griffiths-Jones S."/>
            <person name="Grocock R."/>
            <person name="Guy J."/>
            <person name="Hall R.E."/>
            <person name="Hammond S."/>
            <person name="Harley J.L."/>
            <person name="Harrison E.S.I."/>
            <person name="Hart E.A."/>
            <person name="Heath P.D."/>
            <person name="Henderson C.D."/>
            <person name="Hopkins B.L."/>
            <person name="Howard P.J."/>
            <person name="Howden P.J."/>
            <person name="Huckle E."/>
            <person name="Johnson C."/>
            <person name="Johnson D."/>
            <person name="Joy A.A."/>
            <person name="Kay M."/>
            <person name="Keenan S."/>
            <person name="Kershaw J.K."/>
            <person name="Kimberley A.M."/>
            <person name="King A."/>
            <person name="Knights A."/>
            <person name="Laird G.K."/>
            <person name="Langford C."/>
            <person name="Lawlor S."/>
            <person name="Leongamornlert D.A."/>
            <person name="Leversha M."/>
            <person name="Lloyd C."/>
            <person name="Lloyd D.M."/>
            <person name="Lovell J."/>
            <person name="Martin S."/>
            <person name="Mashreghi-Mohammadi M."/>
            <person name="Matthews L."/>
            <person name="McLaren S."/>
            <person name="McLay K.E."/>
            <person name="McMurray A."/>
            <person name="Milne S."/>
            <person name="Nickerson T."/>
            <person name="Nisbett J."/>
            <person name="Nordsiek G."/>
            <person name="Pearce A.V."/>
            <person name="Peck A.I."/>
            <person name="Porter K.M."/>
            <person name="Pandian R."/>
            <person name="Pelan S."/>
            <person name="Phillimore B."/>
            <person name="Povey S."/>
            <person name="Ramsey Y."/>
            <person name="Rand V."/>
            <person name="Scharfe M."/>
            <person name="Sehra H.K."/>
            <person name="Shownkeen R."/>
            <person name="Sims S.K."/>
            <person name="Skuce C.D."/>
            <person name="Smith M."/>
            <person name="Steward C.A."/>
            <person name="Swarbreck D."/>
            <person name="Sycamore N."/>
            <person name="Tester J."/>
            <person name="Thorpe A."/>
            <person name="Tracey A."/>
            <person name="Tromans A."/>
            <person name="Thomas D.W."/>
            <person name="Wall M."/>
            <person name="Wallis J.M."/>
            <person name="West A.P."/>
            <person name="Whitehead S.L."/>
            <person name="Willey D.L."/>
            <person name="Williams S.A."/>
            <person name="Wilming L."/>
            <person name="Wray P.W."/>
            <person name="Young L."/>
            <person name="Ashurst J.L."/>
            <person name="Coulson A."/>
            <person name="Blocker H."/>
            <person name="Durbin R.M."/>
            <person name="Sulston J.E."/>
            <person name="Hubbard T."/>
            <person name="Jackson M.J."/>
            <person name="Bentley D.R."/>
            <person name="Beck S."/>
            <person name="Rogers J."/>
            <person name="Dunham I."/>
        </authorList>
    </citation>
    <scope>NUCLEOTIDE SEQUENCE [LARGE SCALE GENOMIC DNA]</scope>
</reference>
<reference key="6">
    <citation type="submission" date="2005-09" db="EMBL/GenBank/DDBJ databases">
        <authorList>
            <person name="Mural R.J."/>
            <person name="Istrail S."/>
            <person name="Sutton G.G."/>
            <person name="Florea L."/>
            <person name="Halpern A.L."/>
            <person name="Mobarry C.M."/>
            <person name="Lippert R."/>
            <person name="Walenz B."/>
            <person name="Shatkay H."/>
            <person name="Dew I."/>
            <person name="Miller J.R."/>
            <person name="Flanigan M.J."/>
            <person name="Edwards N.J."/>
            <person name="Bolanos R."/>
            <person name="Fasulo D."/>
            <person name="Halldorsson B.V."/>
            <person name="Hannenhalli S."/>
            <person name="Turner R."/>
            <person name="Yooseph S."/>
            <person name="Lu F."/>
            <person name="Nusskern D.R."/>
            <person name="Shue B.C."/>
            <person name="Zheng X.H."/>
            <person name="Zhong F."/>
            <person name="Delcher A.L."/>
            <person name="Huson D.H."/>
            <person name="Kravitz S.A."/>
            <person name="Mouchard L."/>
            <person name="Reinert K."/>
            <person name="Remington K.A."/>
            <person name="Clark A.G."/>
            <person name="Waterman M.S."/>
            <person name="Eichler E.E."/>
            <person name="Adams M.D."/>
            <person name="Hunkapiller M.W."/>
            <person name="Myers E.W."/>
            <person name="Venter J.C."/>
        </authorList>
    </citation>
    <scope>NUCLEOTIDE SEQUENCE [LARGE SCALE GENOMIC DNA]</scope>
</reference>
<reference key="7">
    <citation type="journal article" date="2004" name="Genome Res.">
        <title>The status, quality, and expansion of the NIH full-length cDNA project: the Mammalian Gene Collection (MGC).</title>
        <authorList>
            <consortium name="The MGC Project Team"/>
        </authorList>
    </citation>
    <scope>NUCLEOTIDE SEQUENCE [LARGE SCALE MRNA] (ISOFORMS 1 AND 2)</scope>
    <source>
        <tissue>Duodenum</tissue>
        <tissue>Eye</tissue>
        <tissue>Lung</tissue>
    </source>
</reference>
<reference key="8">
    <citation type="journal article" date="2002" name="FEBS Lett.">
        <title>Identification of G protein-coupled receptor genes from the human genome sequence.</title>
        <authorList>
            <person name="Takeda S."/>
            <person name="Kadowaki S."/>
            <person name="Haga T."/>
            <person name="Takaesu H."/>
            <person name="Mitaku S."/>
        </authorList>
    </citation>
    <scope>NUCLEOTIDE SEQUENCE [GENOMIC DNA] OF 601-968</scope>
</reference>
<reference key="9">
    <citation type="journal article" date="2006" name="Science">
        <title>The consensus coding sequences of human breast and colorectal cancers.</title>
        <authorList>
            <person name="Sjoeblom T."/>
            <person name="Jones S."/>
            <person name="Wood L.D."/>
            <person name="Parsons D.W."/>
            <person name="Lin J."/>
            <person name="Barber T.D."/>
            <person name="Mandelker D."/>
            <person name="Leary R.J."/>
            <person name="Ptak J."/>
            <person name="Silliman N."/>
            <person name="Szabo S."/>
            <person name="Buckhaults P."/>
            <person name="Farrell C."/>
            <person name="Meeh P."/>
            <person name="Markowitz S.D."/>
            <person name="Willis J."/>
            <person name="Dawson D."/>
            <person name="Willson J.K.V."/>
            <person name="Gazdar A.F."/>
            <person name="Hartigan J."/>
            <person name="Wu L."/>
            <person name="Liu C."/>
            <person name="Parmigiani G."/>
            <person name="Park B.H."/>
            <person name="Bachman K.E."/>
            <person name="Papadopoulos N."/>
            <person name="Vogelstein B."/>
            <person name="Kinzler K.W."/>
            <person name="Velculescu V.E."/>
        </authorList>
    </citation>
    <scope>VARIANT [LARGE SCALE ANALYSIS] MET-686</scope>
</reference>
<reference key="10">
    <citation type="journal article" date="2012" name="Am. J. Hum. Genet.">
        <title>Mutations in PIGO, a member of the GPI-anchor-synthesis pathway, cause hyperphosphatasia with mental retardation.</title>
        <authorList>
            <person name="Krawitz P.M."/>
            <person name="Murakami Y."/>
            <person name="Hecht J."/>
            <person name="Kruger U."/>
            <person name="Holder S.E."/>
            <person name="Mortier G.R."/>
            <person name="Delle Chiaie B."/>
            <person name="De Baere E."/>
            <person name="Thompson M.D."/>
            <person name="Roscioli T."/>
            <person name="Kielbasa S."/>
            <person name="Kinoshita T."/>
            <person name="Mundlos S."/>
            <person name="Robinson P.N."/>
            <person name="Horn D."/>
        </authorList>
    </citation>
    <scope>VARIANT HPMRS2 PHE-957</scope>
</reference>
<reference key="11">
    <citation type="journal article" date="2013" name="Neurology">
        <title>Vitamin B6-responsive epilepsy due to inherited GPI deficiency.</title>
        <authorList>
            <person name="Kuki I."/>
            <person name="Takahashi Y."/>
            <person name="Okazaki S."/>
            <person name="Kawawaki H."/>
            <person name="Ehara E."/>
            <person name="Inoue N."/>
            <person name="Kinoshita T."/>
            <person name="Murakami Y."/>
        </authorList>
    </citation>
    <scope>VARIANT HPMRS2 TRP-119</scope>
    <scope>CHARACTERIZATION OF VARIANT HPMRS2 TRP-119</scope>
    <scope>FUNCTION</scope>
    <scope>CATALYTIC ACTIVITY</scope>
</reference>
<reference key="12">
    <citation type="journal article" date="2014" name="Epilepsia">
        <title>PIGO mutations in intractable epilepsy and severe developmental delay with mild elevation of alkaline phosphatase levels.</title>
        <authorList>
            <person name="Nakamura K."/>
            <person name="Osaka H."/>
            <person name="Murakami Y."/>
            <person name="Anzai R."/>
            <person name="Nishiyama K."/>
            <person name="Kodera H."/>
            <person name="Nakashima M."/>
            <person name="Tsurusaki Y."/>
            <person name="Miyake N."/>
            <person name="Kinoshita T."/>
            <person name="Matsumoto N."/>
            <person name="Saitsu H."/>
        </authorList>
    </citation>
    <scope>VARIANT ASN-130</scope>
    <scope>CHARACTERIZATION OF VARIANT ASN-130</scope>
    <scope>FUNCTION</scope>
    <scope>CATALYTIC ACTIVITY</scope>
</reference>
<reference key="13">
    <citation type="journal article" date="2017" name="Hum. Mutat.">
        <title>Phenotype-genotype correlations of PIGO deficiency with variable phenotypes from infantile lethality to mild learning difficulties.</title>
        <authorList>
            <person name="Tanigawa J."/>
            <person name="Mimatsu H."/>
            <person name="Mizuno S."/>
            <person name="Okamoto N."/>
            <person name="Fukushi D."/>
            <person name="Tominaga K."/>
            <person name="Kidokoro H."/>
            <person name="Muramatsu Y."/>
            <person name="Nishi E."/>
            <person name="Nakamura S."/>
            <person name="Motooka D."/>
            <person name="Nomura N."/>
            <person name="Hayasaka K."/>
            <person name="Niihori T."/>
            <person name="Aoki Y."/>
            <person name="Nabatame S."/>
            <person name="Hayakawa M."/>
            <person name="Natsume J."/>
            <person name="Ozono K."/>
            <person name="Kinoshita T."/>
            <person name="Wakamatsu N."/>
            <person name="Murakami Y."/>
        </authorList>
    </citation>
    <scope>VARIANTS HPMRS2 LYS-344; SER-370; 430-GLN--ARG-1089 DEL AND GLU-1047</scope>
    <scope>CHARACTERIZATION OF VARIANTS HPMRS2 TRP-119; LYS-344; SER-370; PHE-957 AND GLU-1047</scope>
    <scope>CHARACTERIZATION OF ASN-130</scope>
    <scope>FUNCTION</scope>
    <scope>CATALYTIC ACTIVITY</scope>
</reference>
<reference key="14">
    <citation type="journal article" date="2017" name="Metab. Brain Dis.">
        <title>A homozygous PIGO mutation associated with severe infantile epileptic encephalopathy and corpus callosum hypoplasia, but normal alkaline phosphatase levels.</title>
        <authorList>
            <person name="Zehavi Y."/>
            <person name="von Renesse A."/>
            <person name="Daniel-Spiegel E."/>
            <person name="Sapir Y."/>
            <person name="Zalman L."/>
            <person name="Chervinsky I."/>
            <person name="Schuelke M."/>
            <person name="Straussberg R."/>
            <person name="Spiegel R."/>
        </authorList>
    </citation>
    <scope>VARIANT ILE-255</scope>
</reference>
<reference key="15">
    <citation type="journal article" date="2017" name="Orphanet J. Rare Dis.">
        <title>PIGO deficiency: palmoplantar keratoderma and novel mutations.</title>
        <authorList>
            <person name="Morren M.A."/>
            <person name="Jaeken J."/>
            <person name="Visser G."/>
            <person name="Salles I."/>
            <person name="Van Geet C."/>
            <person name="Simeoni I."/>
            <person name="Turro E."/>
            <person name="Freson K."/>
        </authorList>
    </citation>
    <scope>VARIANT HPMRS2 PRO-871</scope>
</reference>
<organism>
    <name type="scientific">Homo sapiens</name>
    <name type="common">Human</name>
    <dbReference type="NCBI Taxonomy" id="9606"/>
    <lineage>
        <taxon>Eukaryota</taxon>
        <taxon>Metazoa</taxon>
        <taxon>Chordata</taxon>
        <taxon>Craniata</taxon>
        <taxon>Vertebrata</taxon>
        <taxon>Euteleostomi</taxon>
        <taxon>Mammalia</taxon>
        <taxon>Eutheria</taxon>
        <taxon>Euarchontoglires</taxon>
        <taxon>Primates</taxon>
        <taxon>Haplorrhini</taxon>
        <taxon>Catarrhini</taxon>
        <taxon>Hominidae</taxon>
        <taxon>Homo</taxon>
    </lineage>
</organism>
<gene>
    <name evidence="16" type="primary">PIGO</name>
    <name type="ORF">UNQ632/PRO1249</name>
</gene>
<comment type="function">
    <text evidence="13 14 15">Catalytic subunit of the ethanolamine phosphate transferase 3 complex that transfers an ethanolamine phosphate (EtNP) from a phosphatidylethanolamine (PE) to the 6-OH position of the third alpha-1,2-linked mannose of an alpha-D-Man-(1-&gt;2)-alpha-D-Man-(1-&gt;6)-2-PEtn-alpha-D-Man-(1-&gt;4)-alpha-D-GlcN-(1-&gt;6)-(1-radyl,2-acyl-sn-glycero-3-phospho)-2-acyl-inositol (also termed H6) intermediate to generate a 6-PEtn-alpha-D-Man-(1-&gt;2)-alpha-D-Man-(1-&gt;6)-2-PEtn-alpha-D-Man-(1-&gt;4)-alpha-D-GlcN-(1-&gt;6)-(1-radyl,2-acyl-sn-glycero-3-phospho)-2-acyl-inositol (also termed H7) and participates in the tenth step of the glycosylphosphatidylinositol-anchor biosynthesis.</text>
</comment>
<comment type="pathway">
    <text evidence="5 6 7">Glycolipid biosynthesis; glycosylphosphatidylinositol-anchor biosynthesis.</text>
</comment>
<comment type="subunit">
    <text evidence="1">Part of the ethanolamine phosphate transferase 3 complex composed by PIGO and PIGF (By similarity). PIGF is required to stabilize PIGO (By similarity).</text>
</comment>
<comment type="subcellular location">
    <subcellularLocation>
        <location evidence="1">Endoplasmic reticulum membrane</location>
        <topology evidence="2">Multi-pass membrane protein</topology>
    </subcellularLocation>
</comment>
<comment type="alternative products">
    <event type="alternative splicing"/>
    <isoform>
        <id>Q8TEQ8-1</id>
        <name>1</name>
        <sequence type="displayed"/>
    </isoform>
    <isoform>
        <id>Q8TEQ8-2</id>
        <name>2</name>
        <sequence type="described" ref="VSP_003944"/>
    </isoform>
    <text>Additional isoforms seem to exist.</text>
</comment>
<comment type="disease" evidence="4 5 7 8">
    <disease id="DI-03510">
        <name>Hyperphosphatasia with impaired intellectual development syndrome 2</name>
        <acronym>HPMRS2</acronym>
        <description>An autosomal recessive form of intellectual disability characterized by facial dysmorphism, brachytelephalangy, and persistent elevated serum alkaline phosphatase (hyperphosphatasia). Some patients may have additional features, such as cardiac septal defects or seizures.</description>
        <dbReference type="MIM" id="614749"/>
    </disease>
    <text>The disease is caused by variants affecting the gene represented in this entry.</text>
</comment>
<comment type="similarity">
    <text evidence="12">Belongs to the PIGG/PIGN/PIGO family. PIGO subfamily.</text>
</comment>
<comment type="sequence caution" evidence="12">
    <conflict type="erroneous gene model prediction">
        <sequence resource="EMBL-CDS" id="AAC07985"/>
    </conflict>
</comment>
<comment type="sequence caution" evidence="12">
    <conflict type="erroneous initiation">
        <sequence resource="EMBL-CDS" id="AAH01030"/>
    </conflict>
    <text>Truncated N-terminus.</text>
</comment>
<comment type="sequence caution" evidence="12">
    <conflict type="erroneous initiation">
        <sequence resource="EMBL-CDS" id="AAH13987"/>
    </conflict>
    <text>Truncated N-terminus.</text>
</comment>
<comment type="sequence caution" evidence="12">
    <conflict type="frameshift">
        <sequence resource="EMBL-CDS" id="BAB84890"/>
    </conflict>
</comment>
<comment type="sequence caution" evidence="12">
    <conflict type="frameshift">
        <sequence resource="EMBL-CDS" id="BAC03414"/>
    </conflict>
</comment>
<comment type="sequence caution" evidence="12">
    <conflict type="frameshift">
        <sequence resource="EMBL-CDS" id="CAD38806"/>
    </conflict>
</comment>